<keyword id="KW-0488">Methylation</keyword>
<keyword id="KW-1185">Reference proteome</keyword>
<keyword id="KW-0687">Ribonucleoprotein</keyword>
<keyword id="KW-0689">Ribosomal protein</keyword>
<keyword id="KW-0694">RNA-binding</keyword>
<keyword id="KW-0699">rRNA-binding</keyword>
<proteinExistence type="inferred from homology"/>
<gene>
    <name evidence="1" type="primary">rplK</name>
    <name type="ordered locus">Dalk_1925</name>
</gene>
<sequence length="140" mass="14775">MAKKVLAMVKLQVQAGKANPSPPIGPALGQHGVNIMEFCKAFNARTADQEGMVIPVVLTVYQDRSFSFITKTPPASVLILKAAKLAKGSSDPKKIKVGKITKAQVEDIANLKMVDLNAKDMAGASKIIAGTARSMGIEVV</sequence>
<feature type="chain" id="PRO_1000195617" description="Large ribosomal subunit protein uL11">
    <location>
        <begin position="1"/>
        <end position="140"/>
    </location>
</feature>
<dbReference type="EMBL" id="CP001322">
    <property type="protein sequence ID" value="ACL03622.1"/>
    <property type="molecule type" value="Genomic_DNA"/>
</dbReference>
<dbReference type="RefSeq" id="WP_012611053.1">
    <property type="nucleotide sequence ID" value="NC_011768.1"/>
</dbReference>
<dbReference type="SMR" id="B8FEU5"/>
<dbReference type="KEGG" id="dal:Dalk_1925"/>
<dbReference type="eggNOG" id="COG0080">
    <property type="taxonomic scope" value="Bacteria"/>
</dbReference>
<dbReference type="HOGENOM" id="CLU_074237_2_1_7"/>
<dbReference type="Proteomes" id="UP000000739">
    <property type="component" value="Chromosome"/>
</dbReference>
<dbReference type="GO" id="GO:0022625">
    <property type="term" value="C:cytosolic large ribosomal subunit"/>
    <property type="evidence" value="ECO:0007669"/>
    <property type="project" value="TreeGrafter"/>
</dbReference>
<dbReference type="GO" id="GO:0070180">
    <property type="term" value="F:large ribosomal subunit rRNA binding"/>
    <property type="evidence" value="ECO:0007669"/>
    <property type="project" value="UniProtKB-UniRule"/>
</dbReference>
<dbReference type="GO" id="GO:0003735">
    <property type="term" value="F:structural constituent of ribosome"/>
    <property type="evidence" value="ECO:0007669"/>
    <property type="project" value="InterPro"/>
</dbReference>
<dbReference type="GO" id="GO:0006412">
    <property type="term" value="P:translation"/>
    <property type="evidence" value="ECO:0007669"/>
    <property type="project" value="UniProtKB-UniRule"/>
</dbReference>
<dbReference type="CDD" id="cd00349">
    <property type="entry name" value="Ribosomal_L11"/>
    <property type="match status" value="1"/>
</dbReference>
<dbReference type="FunFam" id="1.10.10.250:FF:000001">
    <property type="entry name" value="50S ribosomal protein L11"/>
    <property type="match status" value="1"/>
</dbReference>
<dbReference type="FunFam" id="3.30.1550.10:FF:000001">
    <property type="entry name" value="50S ribosomal protein L11"/>
    <property type="match status" value="1"/>
</dbReference>
<dbReference type="Gene3D" id="1.10.10.250">
    <property type="entry name" value="Ribosomal protein L11, C-terminal domain"/>
    <property type="match status" value="1"/>
</dbReference>
<dbReference type="Gene3D" id="3.30.1550.10">
    <property type="entry name" value="Ribosomal protein L11/L12, N-terminal domain"/>
    <property type="match status" value="1"/>
</dbReference>
<dbReference type="HAMAP" id="MF_00736">
    <property type="entry name" value="Ribosomal_uL11"/>
    <property type="match status" value="1"/>
</dbReference>
<dbReference type="InterPro" id="IPR000911">
    <property type="entry name" value="Ribosomal_uL11"/>
</dbReference>
<dbReference type="InterPro" id="IPR006519">
    <property type="entry name" value="Ribosomal_uL11_bac-typ"/>
</dbReference>
<dbReference type="InterPro" id="IPR020783">
    <property type="entry name" value="Ribosomal_uL11_C"/>
</dbReference>
<dbReference type="InterPro" id="IPR036769">
    <property type="entry name" value="Ribosomal_uL11_C_sf"/>
</dbReference>
<dbReference type="InterPro" id="IPR020784">
    <property type="entry name" value="Ribosomal_uL11_N"/>
</dbReference>
<dbReference type="InterPro" id="IPR036796">
    <property type="entry name" value="Ribosomal_uL11_N_sf"/>
</dbReference>
<dbReference type="NCBIfam" id="TIGR01632">
    <property type="entry name" value="L11_bact"/>
    <property type="match status" value="1"/>
</dbReference>
<dbReference type="PANTHER" id="PTHR11661">
    <property type="entry name" value="60S RIBOSOMAL PROTEIN L12"/>
    <property type="match status" value="1"/>
</dbReference>
<dbReference type="PANTHER" id="PTHR11661:SF1">
    <property type="entry name" value="LARGE RIBOSOMAL SUBUNIT PROTEIN UL11M"/>
    <property type="match status" value="1"/>
</dbReference>
<dbReference type="Pfam" id="PF00298">
    <property type="entry name" value="Ribosomal_L11"/>
    <property type="match status" value="1"/>
</dbReference>
<dbReference type="Pfam" id="PF03946">
    <property type="entry name" value="Ribosomal_L11_N"/>
    <property type="match status" value="1"/>
</dbReference>
<dbReference type="SMART" id="SM00649">
    <property type="entry name" value="RL11"/>
    <property type="match status" value="1"/>
</dbReference>
<dbReference type="SUPFAM" id="SSF54747">
    <property type="entry name" value="Ribosomal L11/L12e N-terminal domain"/>
    <property type="match status" value="1"/>
</dbReference>
<dbReference type="SUPFAM" id="SSF46906">
    <property type="entry name" value="Ribosomal protein L11, C-terminal domain"/>
    <property type="match status" value="1"/>
</dbReference>
<name>RL11_DESAL</name>
<protein>
    <recommendedName>
        <fullName evidence="1">Large ribosomal subunit protein uL11</fullName>
    </recommendedName>
    <alternativeName>
        <fullName evidence="2">50S ribosomal protein L11</fullName>
    </alternativeName>
</protein>
<accession>B8FEU5</accession>
<evidence type="ECO:0000255" key="1">
    <source>
        <dbReference type="HAMAP-Rule" id="MF_00736"/>
    </source>
</evidence>
<evidence type="ECO:0000305" key="2"/>
<reference key="1">
    <citation type="journal article" date="2012" name="Environ. Microbiol.">
        <title>The genome sequence of Desulfatibacillum alkenivorans AK-01: a blueprint for anaerobic alkane oxidation.</title>
        <authorList>
            <person name="Callaghan A.V."/>
            <person name="Morris B.E."/>
            <person name="Pereira I.A."/>
            <person name="McInerney M.J."/>
            <person name="Austin R.N."/>
            <person name="Groves J.T."/>
            <person name="Kukor J.J."/>
            <person name="Suflita J.M."/>
            <person name="Young L.Y."/>
            <person name="Zylstra G.J."/>
            <person name="Wawrik B."/>
        </authorList>
    </citation>
    <scope>NUCLEOTIDE SEQUENCE [LARGE SCALE GENOMIC DNA]</scope>
    <source>
        <strain>AK-01</strain>
    </source>
</reference>
<organism>
    <name type="scientific">Desulfatibacillum aliphaticivorans</name>
    <dbReference type="NCBI Taxonomy" id="218208"/>
    <lineage>
        <taxon>Bacteria</taxon>
        <taxon>Pseudomonadati</taxon>
        <taxon>Thermodesulfobacteriota</taxon>
        <taxon>Desulfobacteria</taxon>
        <taxon>Desulfobacterales</taxon>
        <taxon>Desulfatibacillaceae</taxon>
        <taxon>Desulfatibacillum</taxon>
    </lineage>
</organism>
<comment type="function">
    <text evidence="1">Forms part of the ribosomal stalk which helps the ribosome interact with GTP-bound translation factors.</text>
</comment>
<comment type="subunit">
    <text evidence="1">Part of the ribosomal stalk of the 50S ribosomal subunit. Interacts with L10 and the large rRNA to form the base of the stalk. L10 forms an elongated spine to which L12 dimers bind in a sequential fashion forming a multimeric L10(L12)X complex.</text>
</comment>
<comment type="PTM">
    <text evidence="1">One or more lysine residues are methylated.</text>
</comment>
<comment type="similarity">
    <text evidence="1">Belongs to the universal ribosomal protein uL11 family.</text>
</comment>